<proteinExistence type="inferred from homology"/>
<reference key="1">
    <citation type="journal article" date="1993" name="Virus Res.">
        <title>Analysis of the nucleotide sequence of a 43 kbp segment of the genome of variola virus India-1967 strain.</title>
        <authorList>
            <person name="Shchelkunov S.N."/>
            <person name="Blinov V.M."/>
            <person name="Resenchuk S.M."/>
            <person name="Totmenin A.V."/>
            <person name="Sandakhchiev L.S."/>
        </authorList>
    </citation>
    <scope>NUCLEOTIDE SEQUENCE [GENOMIC DNA]</scope>
</reference>
<reference key="2">
    <citation type="journal article" date="1993" name="FEBS Lett.">
        <title>Genes of variola and vaccinia viruses necessary to overcome the host protective mechanisms.</title>
        <authorList>
            <person name="Shchelkunov S.N."/>
            <person name="Blinov V.M."/>
            <person name="Sandakhchiev L.S."/>
        </authorList>
    </citation>
    <scope>NUCLEOTIDE SEQUENCE [GENOMIC DNA]</scope>
</reference>
<accession>P0DSZ3</accession>
<accession>P33869</accession>
<sequence length="212" mass="23746">MAETKEFKTLYNLFIDSYLQKLAQHSIPTNVTCAIHIGEVIGQFKNCALRITNKCMSNTRLSFTLMVESFIEVISLLPEKDRRAIAEEIGIDLNDVPSAVSKLEKNCNAYAEVNNIIDIQKLNIGECSAPPGQHMLLQIVNTGSAGANCGLQTILKSLNKIYVPPIIENRLPYYDPWFLVGVAIILVIFTVAICSIRRNLALKYRYGTFLYV</sequence>
<organismHost>
    <name type="scientific">Homo sapiens</name>
    <name type="common">Human</name>
    <dbReference type="NCBI Taxonomy" id="9606"/>
</organismHost>
<evidence type="ECO:0000250" key="1">
    <source>
        <dbReference type="UniProtKB" id="P24361"/>
    </source>
</evidence>
<evidence type="ECO:0000255" key="2"/>
<evidence type="ECO:0000305" key="3"/>
<comment type="function">
    <text evidence="1">Component of the entry fusion complex (EFC), which consists of 11 proteins. During cell infection, this complex mediates entry of the virion core into the host cytoplasm by a two-step mechanism consisting of lipid mixing of the viral and cellular membranes and subsequent pore formation.</text>
</comment>
<comment type="subunit">
    <text evidence="1">Component of the entry fusion complex (EFC) composed of OPG053, OPG076, OPG086, OPG094, OPG095, OPG099, OPG107, OPG143, OPG104, OPG147 and OPG155. Except for OPG095 and OPG052, each of the EFC proteins is required for assembly or stability of the complex.</text>
</comment>
<comment type="subcellular location">
    <subcellularLocation>
        <location evidence="1">Virion membrane</location>
        <topology evidence="1">Single-pass membrane protein</topology>
    </subcellularLocation>
    <text evidence="1">Component of the mature virion (MV) membrane.</text>
</comment>
<comment type="PTM">
    <text evidence="1">Disulfid bonds are oxidized in the cytoplasm by OPG088 protein.</text>
</comment>
<comment type="PTM">
    <text evidence="1">Unglycosylated because produced in viral factories instead of the classic ER -Golgi route.</text>
</comment>
<comment type="similarity">
    <text evidence="3">Belongs to the orthopoxvirus OPG053 family.</text>
</comment>
<keyword id="KW-1015">Disulfide bond</keyword>
<keyword id="KW-0426">Late protein</keyword>
<keyword id="KW-0472">Membrane</keyword>
<keyword id="KW-1185">Reference proteome</keyword>
<keyword id="KW-0812">Transmembrane</keyword>
<keyword id="KW-1133">Transmembrane helix</keyword>
<keyword id="KW-0261">Viral envelope protein</keyword>
<keyword id="KW-0946">Virion</keyword>
<protein>
    <recommendedName>
        <fullName>EFC-associated protein OPG053</fullName>
    </recommendedName>
    <alternativeName>
        <fullName>Protein F9</fullName>
    </alternativeName>
</protein>
<dbReference type="EMBL" id="X69198">
    <property type="protein sequence ID" value="CAA48974.1"/>
    <property type="molecule type" value="Genomic_DNA"/>
</dbReference>
<dbReference type="PIR" id="D36840">
    <property type="entry name" value="D36840"/>
</dbReference>
<dbReference type="RefSeq" id="NP_042077.1">
    <property type="nucleotide sequence ID" value="NC_001611.1"/>
</dbReference>
<dbReference type="SMR" id="P0DSZ3"/>
<dbReference type="GeneID" id="1486569"/>
<dbReference type="KEGG" id="vg:1486569"/>
<dbReference type="Proteomes" id="UP000002060">
    <property type="component" value="Segment"/>
</dbReference>
<dbReference type="GO" id="GO:0016020">
    <property type="term" value="C:membrane"/>
    <property type="evidence" value="ECO:0007669"/>
    <property type="project" value="UniProtKB-KW"/>
</dbReference>
<dbReference type="GO" id="GO:0019031">
    <property type="term" value="C:viral envelope"/>
    <property type="evidence" value="ECO:0007669"/>
    <property type="project" value="UniProtKB-KW"/>
</dbReference>
<dbReference type="GO" id="GO:0055036">
    <property type="term" value="C:virion membrane"/>
    <property type="evidence" value="ECO:0007669"/>
    <property type="project" value="UniProtKB-SubCell"/>
</dbReference>
<dbReference type="InterPro" id="IPR003472">
    <property type="entry name" value="Virion_mem_poxvirus_L1"/>
</dbReference>
<dbReference type="Pfam" id="PF02442">
    <property type="entry name" value="L1R_F9L"/>
    <property type="match status" value="1"/>
</dbReference>
<feature type="chain" id="PRO_0000448184" description="EFC-associated protein OPG053">
    <location>
        <begin position="1"/>
        <end position="212"/>
    </location>
</feature>
<feature type="topological domain" description="Virion surface" evidence="2">
    <location>
        <begin position="1"/>
        <end position="175"/>
    </location>
</feature>
<feature type="transmembrane region" description="Helical" evidence="2">
    <location>
        <begin position="176"/>
        <end position="196"/>
    </location>
</feature>
<feature type="topological domain" description="Intravirion" evidence="2">
    <location>
        <begin position="197"/>
        <end position="212"/>
    </location>
</feature>
<feature type="disulfide bond" description="by OPG088" evidence="1">
    <location>
        <begin position="33"/>
        <end position="55"/>
    </location>
</feature>
<feature type="disulfide bond" description="by OPG088" evidence="1">
    <location>
        <begin position="47"/>
        <end position="127"/>
    </location>
</feature>
<feature type="disulfide bond" description="by OPG088" evidence="1">
    <location>
        <begin position="107"/>
        <end position="149"/>
    </location>
</feature>
<gene>
    <name type="primary">OPG053</name>
    <name type="ORF">C13L</name>
    <name type="ORF">F9L</name>
</gene>
<organism>
    <name type="scientific">Variola virus (isolate Human/India/Ind3/1967)</name>
    <name type="common">VARV</name>
    <name type="synonym">Smallpox virus</name>
    <dbReference type="NCBI Taxonomy" id="587200"/>
    <lineage>
        <taxon>Viruses</taxon>
        <taxon>Varidnaviria</taxon>
        <taxon>Bamfordvirae</taxon>
        <taxon>Nucleocytoviricota</taxon>
        <taxon>Pokkesviricetes</taxon>
        <taxon>Chitovirales</taxon>
        <taxon>Poxviridae</taxon>
        <taxon>Chordopoxvirinae</taxon>
        <taxon>Orthopoxvirus</taxon>
        <taxon>Variola virus</taxon>
    </lineage>
</organism>
<name>PG053_VAR67</name>